<name>ASSY_PSEAB</name>
<keyword id="KW-0028">Amino-acid biosynthesis</keyword>
<keyword id="KW-0055">Arginine biosynthesis</keyword>
<keyword id="KW-0067">ATP-binding</keyword>
<keyword id="KW-0963">Cytoplasm</keyword>
<keyword id="KW-0436">Ligase</keyword>
<keyword id="KW-0547">Nucleotide-binding</keyword>
<protein>
    <recommendedName>
        <fullName evidence="1">Argininosuccinate synthase</fullName>
        <ecNumber evidence="1">6.3.4.5</ecNumber>
    </recommendedName>
    <alternativeName>
        <fullName evidence="1">Citrulline--aspartate ligase</fullName>
    </alternativeName>
</protein>
<proteinExistence type="inferred from homology"/>
<organism>
    <name type="scientific">Pseudomonas aeruginosa (strain UCBPP-PA14)</name>
    <dbReference type="NCBI Taxonomy" id="208963"/>
    <lineage>
        <taxon>Bacteria</taxon>
        <taxon>Pseudomonadati</taxon>
        <taxon>Pseudomonadota</taxon>
        <taxon>Gammaproteobacteria</taxon>
        <taxon>Pseudomonadales</taxon>
        <taxon>Pseudomonadaceae</taxon>
        <taxon>Pseudomonas</taxon>
    </lineage>
</organism>
<feature type="chain" id="PRO_1000000423" description="Argininosuccinate synthase">
    <location>
        <begin position="1"/>
        <end position="405"/>
    </location>
</feature>
<feature type="binding site" evidence="1">
    <location>
        <begin position="10"/>
        <end position="18"/>
    </location>
    <ligand>
        <name>ATP</name>
        <dbReference type="ChEBI" id="CHEBI:30616"/>
    </ligand>
</feature>
<feature type="binding site" evidence="1">
    <location>
        <position position="37"/>
    </location>
    <ligand>
        <name>ATP</name>
        <dbReference type="ChEBI" id="CHEBI:30616"/>
    </ligand>
</feature>
<feature type="binding site" evidence="1">
    <location>
        <position position="88"/>
    </location>
    <ligand>
        <name>L-citrulline</name>
        <dbReference type="ChEBI" id="CHEBI:57743"/>
    </ligand>
</feature>
<feature type="binding site" evidence="1">
    <location>
        <position position="93"/>
    </location>
    <ligand>
        <name>L-citrulline</name>
        <dbReference type="ChEBI" id="CHEBI:57743"/>
    </ligand>
</feature>
<feature type="binding site" evidence="1">
    <location>
        <position position="118"/>
    </location>
    <ligand>
        <name>ATP</name>
        <dbReference type="ChEBI" id="CHEBI:30616"/>
    </ligand>
</feature>
<feature type="binding site" evidence="1">
    <location>
        <position position="120"/>
    </location>
    <ligand>
        <name>L-aspartate</name>
        <dbReference type="ChEBI" id="CHEBI:29991"/>
    </ligand>
</feature>
<feature type="binding site" evidence="1">
    <location>
        <position position="124"/>
    </location>
    <ligand>
        <name>L-aspartate</name>
        <dbReference type="ChEBI" id="CHEBI:29991"/>
    </ligand>
</feature>
<feature type="binding site" evidence="1">
    <location>
        <position position="124"/>
    </location>
    <ligand>
        <name>L-citrulline</name>
        <dbReference type="ChEBI" id="CHEBI:57743"/>
    </ligand>
</feature>
<feature type="binding site" evidence="1">
    <location>
        <position position="125"/>
    </location>
    <ligand>
        <name>L-aspartate</name>
        <dbReference type="ChEBI" id="CHEBI:29991"/>
    </ligand>
</feature>
<feature type="binding site" evidence="1">
    <location>
        <position position="128"/>
    </location>
    <ligand>
        <name>L-citrulline</name>
        <dbReference type="ChEBI" id="CHEBI:57743"/>
    </ligand>
</feature>
<feature type="binding site" evidence="1">
    <location>
        <position position="179"/>
    </location>
    <ligand>
        <name>L-citrulline</name>
        <dbReference type="ChEBI" id="CHEBI:57743"/>
    </ligand>
</feature>
<feature type="binding site" evidence="1">
    <location>
        <position position="188"/>
    </location>
    <ligand>
        <name>L-citrulline</name>
        <dbReference type="ChEBI" id="CHEBI:57743"/>
    </ligand>
</feature>
<feature type="binding site" evidence="1">
    <location>
        <position position="264"/>
    </location>
    <ligand>
        <name>L-citrulline</name>
        <dbReference type="ChEBI" id="CHEBI:57743"/>
    </ligand>
</feature>
<feature type="binding site" evidence="1">
    <location>
        <position position="276"/>
    </location>
    <ligand>
        <name>L-citrulline</name>
        <dbReference type="ChEBI" id="CHEBI:57743"/>
    </ligand>
</feature>
<gene>
    <name evidence="1" type="primary">argG</name>
    <name type="ordered locus">PA14_18740</name>
</gene>
<comment type="catalytic activity">
    <reaction evidence="1">
        <text>L-citrulline + L-aspartate + ATP = 2-(N(omega)-L-arginino)succinate + AMP + diphosphate + H(+)</text>
        <dbReference type="Rhea" id="RHEA:10932"/>
        <dbReference type="ChEBI" id="CHEBI:15378"/>
        <dbReference type="ChEBI" id="CHEBI:29991"/>
        <dbReference type="ChEBI" id="CHEBI:30616"/>
        <dbReference type="ChEBI" id="CHEBI:33019"/>
        <dbReference type="ChEBI" id="CHEBI:57472"/>
        <dbReference type="ChEBI" id="CHEBI:57743"/>
        <dbReference type="ChEBI" id="CHEBI:456215"/>
        <dbReference type="EC" id="6.3.4.5"/>
    </reaction>
</comment>
<comment type="pathway">
    <text evidence="1">Amino-acid biosynthesis; L-arginine biosynthesis; L-arginine from L-ornithine and carbamoyl phosphate: step 2/3.</text>
</comment>
<comment type="subunit">
    <text evidence="1">Homotetramer.</text>
</comment>
<comment type="subcellular location">
    <subcellularLocation>
        <location evidence="1">Cytoplasm</location>
    </subcellularLocation>
</comment>
<comment type="similarity">
    <text evidence="1">Belongs to the argininosuccinate synthase family. Type 1 subfamily.</text>
</comment>
<reference key="1">
    <citation type="journal article" date="2006" name="Genome Biol.">
        <title>Genomic analysis reveals that Pseudomonas aeruginosa virulence is combinatorial.</title>
        <authorList>
            <person name="Lee D.G."/>
            <person name="Urbach J.M."/>
            <person name="Wu G."/>
            <person name="Liberati N.T."/>
            <person name="Feinbaum R.L."/>
            <person name="Miyata S."/>
            <person name="Diggins L.T."/>
            <person name="He J."/>
            <person name="Saucier M."/>
            <person name="Deziel E."/>
            <person name="Friedman L."/>
            <person name="Li L."/>
            <person name="Grills G."/>
            <person name="Montgomery K."/>
            <person name="Kucherlapati R."/>
            <person name="Rahme L.G."/>
            <person name="Ausubel F.M."/>
        </authorList>
    </citation>
    <scope>NUCLEOTIDE SEQUENCE [LARGE SCALE GENOMIC DNA]</scope>
    <source>
        <strain>UCBPP-PA14</strain>
    </source>
</reference>
<sequence length="405" mass="45298">MADVKKVVLAYSGGLDTSVILKWLQDTYNCEVVTFTADLGQGEEVEPARAKARAMGVKEIYIDDLREEFVRDFVYPMFRANTVYEGEYLLGTSIARPLIAKRLIEIANETGADAISHGATGKGNDQVRFELGAYALKPGVKVIAPWREWDLLSREKLMDYAEKHGIPIERHGKKKSPYSMDANLLHISYEGGVLEDTWTEHEEDMWKWTASPENAPDTPTYIELTYRKGDIVAIDGKDMTPAEVLTELNRVGGINGIGRLDIVENRYVGMKSRGCYETPGGTIMLKAHRAIESITLDREVAHLKDELMPKYASLIYTGYWWSPERLMLQQMIDASQVNVNGVVRLKLYKGNVVVVGRKSDDSLFDANIATFEEDGGAYNQADAAGFIKLNALRMRIAANKGRTLS</sequence>
<accession>Q02QZ6</accession>
<evidence type="ECO:0000255" key="1">
    <source>
        <dbReference type="HAMAP-Rule" id="MF_00005"/>
    </source>
</evidence>
<dbReference type="EC" id="6.3.4.5" evidence="1"/>
<dbReference type="EMBL" id="CP000438">
    <property type="protein sequence ID" value="ABJ12760.1"/>
    <property type="molecule type" value="Genomic_DNA"/>
</dbReference>
<dbReference type="RefSeq" id="WP_003092065.1">
    <property type="nucleotide sequence ID" value="NZ_CP034244.1"/>
</dbReference>
<dbReference type="SMR" id="Q02QZ6"/>
<dbReference type="KEGG" id="pau:PA14_18740"/>
<dbReference type="PseudoCAP" id="PA14_18740"/>
<dbReference type="HOGENOM" id="CLU_032784_4_2_6"/>
<dbReference type="BioCyc" id="PAER208963:G1G74-1544-MONOMER"/>
<dbReference type="UniPathway" id="UPA00068">
    <property type="reaction ID" value="UER00113"/>
</dbReference>
<dbReference type="Proteomes" id="UP000000653">
    <property type="component" value="Chromosome"/>
</dbReference>
<dbReference type="GO" id="GO:0005737">
    <property type="term" value="C:cytoplasm"/>
    <property type="evidence" value="ECO:0007669"/>
    <property type="project" value="UniProtKB-SubCell"/>
</dbReference>
<dbReference type="GO" id="GO:0004055">
    <property type="term" value="F:argininosuccinate synthase activity"/>
    <property type="evidence" value="ECO:0007669"/>
    <property type="project" value="UniProtKB-UniRule"/>
</dbReference>
<dbReference type="GO" id="GO:0005524">
    <property type="term" value="F:ATP binding"/>
    <property type="evidence" value="ECO:0007669"/>
    <property type="project" value="UniProtKB-UniRule"/>
</dbReference>
<dbReference type="GO" id="GO:0000053">
    <property type="term" value="P:argininosuccinate metabolic process"/>
    <property type="evidence" value="ECO:0007669"/>
    <property type="project" value="TreeGrafter"/>
</dbReference>
<dbReference type="GO" id="GO:0006526">
    <property type="term" value="P:L-arginine biosynthetic process"/>
    <property type="evidence" value="ECO:0007669"/>
    <property type="project" value="UniProtKB-UniRule"/>
</dbReference>
<dbReference type="GO" id="GO:0000050">
    <property type="term" value="P:urea cycle"/>
    <property type="evidence" value="ECO:0007669"/>
    <property type="project" value="TreeGrafter"/>
</dbReference>
<dbReference type="CDD" id="cd01999">
    <property type="entry name" value="ASS"/>
    <property type="match status" value="1"/>
</dbReference>
<dbReference type="FunFam" id="1.20.5.470:FF:000001">
    <property type="entry name" value="Argininosuccinate synthase"/>
    <property type="match status" value="1"/>
</dbReference>
<dbReference type="FunFam" id="3.40.50.620:FF:000019">
    <property type="entry name" value="Argininosuccinate synthase"/>
    <property type="match status" value="1"/>
</dbReference>
<dbReference type="FunFam" id="3.90.1260.10:FF:000001">
    <property type="entry name" value="Argininosuccinate synthase"/>
    <property type="match status" value="1"/>
</dbReference>
<dbReference type="Gene3D" id="3.90.1260.10">
    <property type="entry name" value="Argininosuccinate synthetase, chain A, domain 2"/>
    <property type="match status" value="1"/>
</dbReference>
<dbReference type="Gene3D" id="3.40.50.620">
    <property type="entry name" value="HUPs"/>
    <property type="match status" value="1"/>
</dbReference>
<dbReference type="Gene3D" id="1.20.5.470">
    <property type="entry name" value="Single helix bin"/>
    <property type="match status" value="1"/>
</dbReference>
<dbReference type="HAMAP" id="MF_00005">
    <property type="entry name" value="Arg_succ_synth_type1"/>
    <property type="match status" value="1"/>
</dbReference>
<dbReference type="InterPro" id="IPR048268">
    <property type="entry name" value="Arginosuc_syn_C"/>
</dbReference>
<dbReference type="InterPro" id="IPR048267">
    <property type="entry name" value="Arginosuc_syn_N"/>
</dbReference>
<dbReference type="InterPro" id="IPR001518">
    <property type="entry name" value="Arginosuc_synth"/>
</dbReference>
<dbReference type="InterPro" id="IPR018223">
    <property type="entry name" value="Arginosuc_synth_CS"/>
</dbReference>
<dbReference type="InterPro" id="IPR023434">
    <property type="entry name" value="Arginosuc_synth_type_1_subfam"/>
</dbReference>
<dbReference type="InterPro" id="IPR024074">
    <property type="entry name" value="AS_cat/multimer_dom_body"/>
</dbReference>
<dbReference type="InterPro" id="IPR014729">
    <property type="entry name" value="Rossmann-like_a/b/a_fold"/>
</dbReference>
<dbReference type="NCBIfam" id="TIGR00032">
    <property type="entry name" value="argG"/>
    <property type="match status" value="1"/>
</dbReference>
<dbReference type="NCBIfam" id="NF001770">
    <property type="entry name" value="PRK00509.1"/>
    <property type="match status" value="1"/>
</dbReference>
<dbReference type="PANTHER" id="PTHR11587">
    <property type="entry name" value="ARGININOSUCCINATE SYNTHASE"/>
    <property type="match status" value="1"/>
</dbReference>
<dbReference type="PANTHER" id="PTHR11587:SF2">
    <property type="entry name" value="ARGININOSUCCINATE SYNTHASE"/>
    <property type="match status" value="1"/>
</dbReference>
<dbReference type="Pfam" id="PF20979">
    <property type="entry name" value="Arginosuc_syn_C"/>
    <property type="match status" value="1"/>
</dbReference>
<dbReference type="Pfam" id="PF00764">
    <property type="entry name" value="Arginosuc_synth"/>
    <property type="match status" value="1"/>
</dbReference>
<dbReference type="SUPFAM" id="SSF52402">
    <property type="entry name" value="Adenine nucleotide alpha hydrolases-like"/>
    <property type="match status" value="1"/>
</dbReference>
<dbReference type="SUPFAM" id="SSF69864">
    <property type="entry name" value="Argininosuccinate synthetase, C-terminal domain"/>
    <property type="match status" value="1"/>
</dbReference>
<dbReference type="PROSITE" id="PS00564">
    <property type="entry name" value="ARGININOSUCCIN_SYN_1"/>
    <property type="match status" value="1"/>
</dbReference>
<dbReference type="PROSITE" id="PS00565">
    <property type="entry name" value="ARGININOSUCCIN_SYN_2"/>
    <property type="match status" value="1"/>
</dbReference>